<comment type="subcellular location">
    <subcellularLocation>
        <location evidence="6">Secreted</location>
    </subcellularLocation>
    <text evidence="6">Secreted in the lumen of olfactory hairs.</text>
</comment>
<comment type="tissue specificity">
    <text evidence="3 4 5">In the ventrolateral region of the antenna, expressed in two distinct types of olfactory hairs: in most sensilla trichodea and in a subset of the small sensilla basiconica (at protein level).</text>
</comment>
<comment type="developmental stage">
    <text evidence="4">Expressed in adult but not in larval olfactory organs.</text>
</comment>
<comment type="similarity">
    <text evidence="6">Belongs to the PBP/GOBP family.</text>
</comment>
<comment type="sequence caution" evidence="6">
    <conflict type="erroneous initiation">
        <sequence resource="EMBL-CDS" id="ABJ16963"/>
    </conflict>
    <text>Extended N-terminus.</text>
</comment>
<protein>
    <recommendedName>
        <fullName>General odorant-binding protein 83a</fullName>
    </recommendedName>
    <alternativeName>
        <fullName>Odorant-binding protein 83a</fullName>
    </alternativeName>
    <alternativeName>
        <fullName>Odorant-binding protein OS-F</fullName>
    </alternativeName>
    <alternativeName>
        <fullName>Pheromone-binding protein-related protein 3</fullName>
        <shortName>PBPRP-3</shortName>
    </alternativeName>
</protein>
<reference key="1">
    <citation type="journal article" date="1994" name="Neuron">
        <title>Members of a family of Drosophila putative odorant-binding proteins are expressed in different subsets of olfactory hairs.</title>
        <authorList>
            <person name="Pikielny C.W."/>
            <person name="Hasan G."/>
            <person name="Rouyer F."/>
            <person name="Rosbash M."/>
        </authorList>
    </citation>
    <scope>NUCLEOTIDE SEQUENCE [MRNA]</scope>
    <scope>TISSUE SPECIFICITY</scope>
    <source>
        <strain>Canton-S</strain>
        <tissue>Antenna</tissue>
    </source>
</reference>
<reference key="2">
    <citation type="journal article" date="1994" name="J. Biol. Chem.">
        <title>Putative Drosophila pheromone-binding proteins expressed in a subregion of the olfactory system.</title>
        <authorList>
            <person name="McKenna M.P."/>
            <person name="Hekmat-Scafe D.S."/>
            <person name="Gaines P."/>
            <person name="Carlson J.R."/>
        </authorList>
    </citation>
    <scope>NUCLEOTIDE SEQUENCE [MRNA]</scope>
    <scope>TISSUE SPECIFICITY</scope>
    <scope>DEVELOPMENTAL STAGE</scope>
    <source>
        <strain>CS-5</strain>
        <tissue>Antenna</tissue>
    </source>
</reference>
<reference key="3">
    <citation type="journal article" date="1997" name="J. Neurosci.">
        <title>Coexpression of two odorant-binding protein homologs in Drosophila: implications for olfactory coding.</title>
        <authorList>
            <person name="Hekmat-Scafe D.S."/>
            <person name="Steinbrecht R.A."/>
            <person name="Carlson J.R."/>
        </authorList>
    </citation>
    <scope>NUCLEOTIDE SEQUENCE [GENOMIC DNA]</scope>
    <scope>TISSUE SPECIFICITY</scope>
    <source>
        <strain>Canton-S</strain>
    </source>
</reference>
<reference key="4">
    <citation type="journal article" date="2003" name="Genetics">
        <title>Patterns of nucleotide polymorphism and divergence in the odorant-binding protein genes OS-E and OS-F: analysis in the melanogaster species subgroup of Drosophila.</title>
        <authorList>
            <person name="Sanchez-Gracia A."/>
            <person name="Aguade M."/>
            <person name="Rozas J."/>
        </authorList>
    </citation>
    <scope>NUCLEOTIDE SEQUENCE [GENOMIC DNA]</scope>
    <source>
        <strain>M11</strain>
        <strain>M13</strain>
        <strain>M2</strain>
        <strain>M20</strain>
        <strain>M22</strain>
        <strain>M23</strain>
        <strain>M26</strain>
        <strain>M36</strain>
        <strain>M40</strain>
        <strain>M47</strain>
        <strain>M54</strain>
        <strain>M55</strain>
        <strain>M59</strain>
        <strain>M66</strain>
    </source>
</reference>
<reference key="5">
    <citation type="journal article" date="2000" name="Science">
        <title>The genome sequence of Drosophila melanogaster.</title>
        <authorList>
            <person name="Adams M.D."/>
            <person name="Celniker S.E."/>
            <person name="Holt R.A."/>
            <person name="Evans C.A."/>
            <person name="Gocayne J.D."/>
            <person name="Amanatides P.G."/>
            <person name="Scherer S.E."/>
            <person name="Li P.W."/>
            <person name="Hoskins R.A."/>
            <person name="Galle R.F."/>
            <person name="George R.A."/>
            <person name="Lewis S.E."/>
            <person name="Richards S."/>
            <person name="Ashburner M."/>
            <person name="Henderson S.N."/>
            <person name="Sutton G.G."/>
            <person name="Wortman J.R."/>
            <person name="Yandell M.D."/>
            <person name="Zhang Q."/>
            <person name="Chen L.X."/>
            <person name="Brandon R.C."/>
            <person name="Rogers Y.-H.C."/>
            <person name="Blazej R.G."/>
            <person name="Champe M."/>
            <person name="Pfeiffer B.D."/>
            <person name="Wan K.H."/>
            <person name="Doyle C."/>
            <person name="Baxter E.G."/>
            <person name="Helt G."/>
            <person name="Nelson C.R."/>
            <person name="Miklos G.L.G."/>
            <person name="Abril J.F."/>
            <person name="Agbayani A."/>
            <person name="An H.-J."/>
            <person name="Andrews-Pfannkoch C."/>
            <person name="Baldwin D."/>
            <person name="Ballew R.M."/>
            <person name="Basu A."/>
            <person name="Baxendale J."/>
            <person name="Bayraktaroglu L."/>
            <person name="Beasley E.M."/>
            <person name="Beeson K.Y."/>
            <person name="Benos P.V."/>
            <person name="Berman B.P."/>
            <person name="Bhandari D."/>
            <person name="Bolshakov S."/>
            <person name="Borkova D."/>
            <person name="Botchan M.R."/>
            <person name="Bouck J."/>
            <person name="Brokstein P."/>
            <person name="Brottier P."/>
            <person name="Burtis K.C."/>
            <person name="Busam D.A."/>
            <person name="Butler H."/>
            <person name="Cadieu E."/>
            <person name="Center A."/>
            <person name="Chandra I."/>
            <person name="Cherry J.M."/>
            <person name="Cawley S."/>
            <person name="Dahlke C."/>
            <person name="Davenport L.B."/>
            <person name="Davies P."/>
            <person name="de Pablos B."/>
            <person name="Delcher A."/>
            <person name="Deng Z."/>
            <person name="Mays A.D."/>
            <person name="Dew I."/>
            <person name="Dietz S.M."/>
            <person name="Dodson K."/>
            <person name="Doup L.E."/>
            <person name="Downes M."/>
            <person name="Dugan-Rocha S."/>
            <person name="Dunkov B.C."/>
            <person name="Dunn P."/>
            <person name="Durbin K.J."/>
            <person name="Evangelista C.C."/>
            <person name="Ferraz C."/>
            <person name="Ferriera S."/>
            <person name="Fleischmann W."/>
            <person name="Fosler C."/>
            <person name="Gabrielian A.E."/>
            <person name="Garg N.S."/>
            <person name="Gelbart W.M."/>
            <person name="Glasser K."/>
            <person name="Glodek A."/>
            <person name="Gong F."/>
            <person name="Gorrell J.H."/>
            <person name="Gu Z."/>
            <person name="Guan P."/>
            <person name="Harris M."/>
            <person name="Harris N.L."/>
            <person name="Harvey D.A."/>
            <person name="Heiman T.J."/>
            <person name="Hernandez J.R."/>
            <person name="Houck J."/>
            <person name="Hostin D."/>
            <person name="Houston K.A."/>
            <person name="Howland T.J."/>
            <person name="Wei M.-H."/>
            <person name="Ibegwam C."/>
            <person name="Jalali M."/>
            <person name="Kalush F."/>
            <person name="Karpen G.H."/>
            <person name="Ke Z."/>
            <person name="Kennison J.A."/>
            <person name="Ketchum K.A."/>
            <person name="Kimmel B.E."/>
            <person name="Kodira C.D."/>
            <person name="Kraft C.L."/>
            <person name="Kravitz S."/>
            <person name="Kulp D."/>
            <person name="Lai Z."/>
            <person name="Lasko P."/>
            <person name="Lei Y."/>
            <person name="Levitsky A.A."/>
            <person name="Li J.H."/>
            <person name="Li Z."/>
            <person name="Liang Y."/>
            <person name="Lin X."/>
            <person name="Liu X."/>
            <person name="Mattei B."/>
            <person name="McIntosh T.C."/>
            <person name="McLeod M.P."/>
            <person name="McPherson D."/>
            <person name="Merkulov G."/>
            <person name="Milshina N.V."/>
            <person name="Mobarry C."/>
            <person name="Morris J."/>
            <person name="Moshrefi A."/>
            <person name="Mount S.M."/>
            <person name="Moy M."/>
            <person name="Murphy B."/>
            <person name="Murphy L."/>
            <person name="Muzny D.M."/>
            <person name="Nelson D.L."/>
            <person name="Nelson D.R."/>
            <person name="Nelson K.A."/>
            <person name="Nixon K."/>
            <person name="Nusskern D.R."/>
            <person name="Pacleb J.M."/>
            <person name="Palazzolo M."/>
            <person name="Pittman G.S."/>
            <person name="Pan S."/>
            <person name="Pollard J."/>
            <person name="Puri V."/>
            <person name="Reese M.G."/>
            <person name="Reinert K."/>
            <person name="Remington K."/>
            <person name="Saunders R.D.C."/>
            <person name="Scheeler F."/>
            <person name="Shen H."/>
            <person name="Shue B.C."/>
            <person name="Siden-Kiamos I."/>
            <person name="Simpson M."/>
            <person name="Skupski M.P."/>
            <person name="Smith T.J."/>
            <person name="Spier E."/>
            <person name="Spradling A.C."/>
            <person name="Stapleton M."/>
            <person name="Strong R."/>
            <person name="Sun E."/>
            <person name="Svirskas R."/>
            <person name="Tector C."/>
            <person name="Turner R."/>
            <person name="Venter E."/>
            <person name="Wang A.H."/>
            <person name="Wang X."/>
            <person name="Wang Z.-Y."/>
            <person name="Wassarman D.A."/>
            <person name="Weinstock G.M."/>
            <person name="Weissenbach J."/>
            <person name="Williams S.M."/>
            <person name="Woodage T."/>
            <person name="Worley K.C."/>
            <person name="Wu D."/>
            <person name="Yang S."/>
            <person name="Yao Q.A."/>
            <person name="Ye J."/>
            <person name="Yeh R.-F."/>
            <person name="Zaveri J.S."/>
            <person name="Zhan M."/>
            <person name="Zhang G."/>
            <person name="Zhao Q."/>
            <person name="Zheng L."/>
            <person name="Zheng X.H."/>
            <person name="Zhong F.N."/>
            <person name="Zhong W."/>
            <person name="Zhou X."/>
            <person name="Zhu S.C."/>
            <person name="Zhu X."/>
            <person name="Smith H.O."/>
            <person name="Gibbs R.A."/>
            <person name="Myers E.W."/>
            <person name="Rubin G.M."/>
            <person name="Venter J.C."/>
        </authorList>
    </citation>
    <scope>NUCLEOTIDE SEQUENCE [LARGE SCALE GENOMIC DNA]</scope>
    <source>
        <strain>Berkeley</strain>
    </source>
</reference>
<reference key="6">
    <citation type="journal article" date="2002" name="Genome Biol.">
        <title>Annotation of the Drosophila melanogaster euchromatic genome: a systematic review.</title>
        <authorList>
            <person name="Misra S."/>
            <person name="Crosby M.A."/>
            <person name="Mungall C.J."/>
            <person name="Matthews B.B."/>
            <person name="Campbell K.S."/>
            <person name="Hradecky P."/>
            <person name="Huang Y."/>
            <person name="Kaminker J.S."/>
            <person name="Millburn G.H."/>
            <person name="Prochnik S.E."/>
            <person name="Smith C.D."/>
            <person name="Tupy J.L."/>
            <person name="Whitfield E.J."/>
            <person name="Bayraktaroglu L."/>
            <person name="Berman B.P."/>
            <person name="Bettencourt B.R."/>
            <person name="Celniker S.E."/>
            <person name="de Grey A.D.N.J."/>
            <person name="Drysdale R.A."/>
            <person name="Harris N.L."/>
            <person name="Richter J."/>
            <person name="Russo S."/>
            <person name="Schroeder A.J."/>
            <person name="Shu S.Q."/>
            <person name="Stapleton M."/>
            <person name="Yamada C."/>
            <person name="Ashburner M."/>
            <person name="Gelbart W.M."/>
            <person name="Rubin G.M."/>
            <person name="Lewis S.E."/>
        </authorList>
    </citation>
    <scope>GENOME REANNOTATION</scope>
    <source>
        <strain>Berkeley</strain>
    </source>
</reference>
<reference key="7">
    <citation type="submission" date="2006-10" db="EMBL/GenBank/DDBJ databases">
        <authorList>
            <person name="Stapleton M."/>
            <person name="Carlson J."/>
            <person name="Frise E."/>
            <person name="Kapadia B."/>
            <person name="Park S."/>
            <person name="Wan K."/>
            <person name="Yu C."/>
            <person name="Celniker S."/>
        </authorList>
    </citation>
    <scope>NUCLEOTIDE SEQUENCE [LARGE SCALE MRNA]</scope>
    <source>
        <strain>Berkeley</strain>
    </source>
</reference>
<proteinExistence type="evidence at protein level"/>
<evidence type="ECO:0000250" key="1"/>
<evidence type="ECO:0000255" key="2"/>
<evidence type="ECO:0000269" key="3">
    <source>
    </source>
</evidence>
<evidence type="ECO:0000269" key="4">
    <source>
    </source>
</evidence>
<evidence type="ECO:0000269" key="5">
    <source>
    </source>
</evidence>
<evidence type="ECO:0000305" key="6"/>
<organism>
    <name type="scientific">Drosophila melanogaster</name>
    <name type="common">Fruit fly</name>
    <dbReference type="NCBI Taxonomy" id="7227"/>
    <lineage>
        <taxon>Eukaryota</taxon>
        <taxon>Metazoa</taxon>
        <taxon>Ecdysozoa</taxon>
        <taxon>Arthropoda</taxon>
        <taxon>Hexapoda</taxon>
        <taxon>Insecta</taxon>
        <taxon>Pterygota</taxon>
        <taxon>Neoptera</taxon>
        <taxon>Endopterygota</taxon>
        <taxon>Diptera</taxon>
        <taxon>Brachycera</taxon>
        <taxon>Muscomorpha</taxon>
        <taxon>Ephydroidea</taxon>
        <taxon>Drosophilidae</taxon>
        <taxon>Drosophila</taxon>
        <taxon>Sophophora</taxon>
    </lineage>
</organism>
<feature type="signal peptide" evidence="2">
    <location>
        <begin position="1"/>
        <end position="33"/>
    </location>
</feature>
<feature type="chain" id="PRO_0000012588" description="General odorant-binding protein 83a">
    <location>
        <begin position="34"/>
        <end position="154"/>
    </location>
</feature>
<feature type="disulfide bond" evidence="1">
    <location>
        <begin position="55"/>
        <end position="86"/>
    </location>
</feature>
<feature type="disulfide bond" evidence="1">
    <location>
        <begin position="82"/>
        <end position="133"/>
    </location>
</feature>
<feature type="disulfide bond" evidence="1">
    <location>
        <begin position="124"/>
        <end position="142"/>
    </location>
</feature>
<gene>
    <name type="primary">Obp83a</name>
    <name type="synonym">OS-F</name>
    <name type="synonym">Pbprp3</name>
    <name type="ORF">CG11421</name>
</gene>
<keyword id="KW-1015">Disulfide bond</keyword>
<keyword id="KW-1185">Reference proteome</keyword>
<keyword id="KW-0964">Secreted</keyword>
<keyword id="KW-0732">Signal</keyword>
<name>OB83A_DROME</name>
<accession>P54193</accession>
<accession>Q059D8</accession>
<accession>Q9VNK2</accession>
<sequence length="154" mass="17326">MALNGFGRRVSASVLLIALSLLSGALILPPAAAQRDENYPPPGILKMAKPFHDACVEKTGVTEAAIKEFSDGEIHEDEKLKCYMNCFFHEIEVVDDNGDVHLEKLFATVPLSMRDKLMEMSKGCVHPEGDTLCHKAWWFHQCWKKADPKHYFLP</sequence>
<dbReference type="EMBL" id="U05982">
    <property type="protein sequence ID" value="AAC46476.1"/>
    <property type="molecule type" value="mRNA"/>
</dbReference>
<dbReference type="EMBL" id="U02542">
    <property type="protein sequence ID" value="AAA21355.1"/>
    <property type="molecule type" value="mRNA"/>
</dbReference>
<dbReference type="EMBL" id="U81503">
    <property type="protein sequence ID" value="AAB51684.1"/>
    <property type="molecule type" value="Genomic_DNA"/>
</dbReference>
<dbReference type="EMBL" id="AJ574644">
    <property type="protein sequence ID" value="CAE00883.1"/>
    <property type="molecule type" value="Genomic_DNA"/>
</dbReference>
<dbReference type="EMBL" id="AJ574762">
    <property type="protein sequence ID" value="CAE00418.1"/>
    <property type="molecule type" value="Genomic_DNA"/>
</dbReference>
<dbReference type="EMBL" id="AJ574763">
    <property type="protein sequence ID" value="CAE00420.1"/>
    <property type="molecule type" value="Genomic_DNA"/>
</dbReference>
<dbReference type="EMBL" id="AJ574764">
    <property type="protein sequence ID" value="CAE00422.1"/>
    <property type="molecule type" value="Genomic_DNA"/>
</dbReference>
<dbReference type="EMBL" id="AJ574765">
    <property type="protein sequence ID" value="CAE00424.1"/>
    <property type="molecule type" value="Genomic_DNA"/>
</dbReference>
<dbReference type="EMBL" id="AJ574766">
    <property type="protein sequence ID" value="CAE00426.1"/>
    <property type="molecule type" value="Genomic_DNA"/>
</dbReference>
<dbReference type="EMBL" id="AJ574767">
    <property type="protein sequence ID" value="CAE00428.1"/>
    <property type="molecule type" value="Genomic_DNA"/>
</dbReference>
<dbReference type="EMBL" id="AJ574768">
    <property type="protein sequence ID" value="CAE00430.1"/>
    <property type="molecule type" value="Genomic_DNA"/>
</dbReference>
<dbReference type="EMBL" id="AJ574769">
    <property type="protein sequence ID" value="CAE00432.1"/>
    <property type="molecule type" value="Genomic_DNA"/>
</dbReference>
<dbReference type="EMBL" id="AJ574770">
    <property type="protein sequence ID" value="CAE00434.1"/>
    <property type="molecule type" value="Genomic_DNA"/>
</dbReference>
<dbReference type="EMBL" id="AJ574771">
    <property type="protein sequence ID" value="CAE00436.1"/>
    <property type="molecule type" value="Genomic_DNA"/>
</dbReference>
<dbReference type="EMBL" id="AJ574772">
    <property type="protein sequence ID" value="CAE00438.1"/>
    <property type="molecule type" value="Genomic_DNA"/>
</dbReference>
<dbReference type="EMBL" id="AJ574773">
    <property type="protein sequence ID" value="CAE00440.1"/>
    <property type="molecule type" value="Genomic_DNA"/>
</dbReference>
<dbReference type="EMBL" id="AJ574774">
    <property type="protein sequence ID" value="CAE00442.1"/>
    <property type="molecule type" value="Genomic_DNA"/>
</dbReference>
<dbReference type="EMBL" id="AE014297">
    <property type="protein sequence ID" value="AAF51929.2"/>
    <property type="molecule type" value="Genomic_DNA"/>
</dbReference>
<dbReference type="EMBL" id="BT029030">
    <property type="protein sequence ID" value="ABJ16963.1"/>
    <property type="status" value="ALT_INIT"/>
    <property type="molecule type" value="mRNA"/>
</dbReference>
<dbReference type="RefSeq" id="NP_001287189.1">
    <property type="nucleotide sequence ID" value="NM_001300260.1"/>
</dbReference>
<dbReference type="RefSeq" id="NP_001287190.1">
    <property type="nucleotide sequence ID" value="NM_001300261.1"/>
</dbReference>
<dbReference type="RefSeq" id="NP_524241.1">
    <property type="nucleotide sequence ID" value="NM_079517.3"/>
</dbReference>
<dbReference type="SMR" id="P54193"/>
<dbReference type="FunCoup" id="P54193">
    <property type="interactions" value="49"/>
</dbReference>
<dbReference type="STRING" id="7227.FBpp0311428"/>
<dbReference type="PaxDb" id="7227-FBpp0078305"/>
<dbReference type="DNASU" id="40737"/>
<dbReference type="EnsemblMetazoa" id="FBtr0078656">
    <property type="protein sequence ID" value="FBpp0078305"/>
    <property type="gene ID" value="FBgn0011281"/>
</dbReference>
<dbReference type="EnsemblMetazoa" id="FBtr0345250">
    <property type="protein sequence ID" value="FBpp0311427"/>
    <property type="gene ID" value="FBgn0011281"/>
</dbReference>
<dbReference type="GeneID" id="40737"/>
<dbReference type="KEGG" id="dme:Dmel_CG11421"/>
<dbReference type="AGR" id="FB:FBgn0011281"/>
<dbReference type="CTD" id="40737"/>
<dbReference type="FlyBase" id="FBgn0011281">
    <property type="gene designation" value="Obp83a"/>
</dbReference>
<dbReference type="VEuPathDB" id="VectorBase:FBgn0011281"/>
<dbReference type="eggNOG" id="ENOG502S7DV">
    <property type="taxonomic scope" value="Eukaryota"/>
</dbReference>
<dbReference type="GeneTree" id="ENSGT00520000056125"/>
<dbReference type="HOGENOM" id="CLU_107288_1_0_1"/>
<dbReference type="InParanoid" id="P54193"/>
<dbReference type="OrthoDB" id="7881430at2759"/>
<dbReference type="PhylomeDB" id="P54193"/>
<dbReference type="BioGRID-ORCS" id="40737">
    <property type="hits" value="0 hits in 1 CRISPR screen"/>
</dbReference>
<dbReference type="GenomeRNAi" id="40737"/>
<dbReference type="PRO" id="PR:P54193"/>
<dbReference type="Proteomes" id="UP000000803">
    <property type="component" value="Chromosome 3R"/>
</dbReference>
<dbReference type="Bgee" id="FBgn0011281">
    <property type="expression patterns" value="Expressed in epithelial cell in antenna and 81 other cell types or tissues"/>
</dbReference>
<dbReference type="ExpressionAtlas" id="P54193">
    <property type="expression patterns" value="baseline and differential"/>
</dbReference>
<dbReference type="GO" id="GO:0005576">
    <property type="term" value="C:extracellular region"/>
    <property type="evidence" value="ECO:0000255"/>
    <property type="project" value="FlyBase"/>
</dbReference>
<dbReference type="GO" id="GO:0005615">
    <property type="term" value="C:extracellular space"/>
    <property type="evidence" value="ECO:0000318"/>
    <property type="project" value="GO_Central"/>
</dbReference>
<dbReference type="GO" id="GO:0005549">
    <property type="term" value="F:odorant binding"/>
    <property type="evidence" value="ECO:0000250"/>
    <property type="project" value="FlyBase"/>
</dbReference>
<dbReference type="GO" id="GO:0005550">
    <property type="term" value="F:pheromone binding"/>
    <property type="evidence" value="ECO:0000250"/>
    <property type="project" value="FlyBase"/>
</dbReference>
<dbReference type="GO" id="GO:0007606">
    <property type="term" value="P:sensory perception of chemical stimulus"/>
    <property type="evidence" value="ECO:0000250"/>
    <property type="project" value="FlyBase"/>
</dbReference>
<dbReference type="GO" id="GO:0007608">
    <property type="term" value="P:sensory perception of smell"/>
    <property type="evidence" value="ECO:0000318"/>
    <property type="project" value="GO_Central"/>
</dbReference>
<dbReference type="CDD" id="cd23992">
    <property type="entry name" value="PBP_GOBP"/>
    <property type="match status" value="1"/>
</dbReference>
<dbReference type="FunFam" id="1.10.238.20:FF:000001">
    <property type="entry name" value="General odorant-binding protein lush"/>
    <property type="match status" value="1"/>
</dbReference>
<dbReference type="Gene3D" id="1.10.238.20">
    <property type="entry name" value="Pheromone/general odorant binding protein domain"/>
    <property type="match status" value="1"/>
</dbReference>
<dbReference type="InterPro" id="IPR006170">
    <property type="entry name" value="PBP/GOBP"/>
</dbReference>
<dbReference type="InterPro" id="IPR036728">
    <property type="entry name" value="PBP_GOBP_sf"/>
</dbReference>
<dbReference type="PANTHER" id="PTHR11857:SF45">
    <property type="entry name" value="GENERAL ODORANT-BINDING PROTEIN 83A-RELATED"/>
    <property type="match status" value="1"/>
</dbReference>
<dbReference type="PANTHER" id="PTHR11857">
    <property type="entry name" value="ODORANT BINDING PROTEIN-RELATED"/>
    <property type="match status" value="1"/>
</dbReference>
<dbReference type="Pfam" id="PF01395">
    <property type="entry name" value="PBP_GOBP"/>
    <property type="match status" value="1"/>
</dbReference>
<dbReference type="PRINTS" id="PR00485">
    <property type="entry name" value="MEALWORMBTLB"/>
</dbReference>
<dbReference type="SMART" id="SM00708">
    <property type="entry name" value="PhBP"/>
    <property type="match status" value="1"/>
</dbReference>
<dbReference type="SUPFAM" id="SSF47565">
    <property type="entry name" value="Insect pheromone/odorant-binding proteins"/>
    <property type="match status" value="1"/>
</dbReference>